<sequence length="334" mass="36920">MSVNYAAGLSPYADKGKCGLPEIFDPPEELERKVWELARLMWQSSSVVFHTGAGISTASGIPDFRGPHGVWTMEERGLAPKFDTTFENARPSKTHMALVQLERMGFLSFLVSQNVDGLHVRSGFPRDKLAELHGNMFVEECPKCKTQYVRDTVVGTMGLKATGRLCTVAKTRGLRACRGELRDTILDWEDSLPDRDLMLADEASRTADLSVTLGTSLQIRPSGNLPLATKRRGGRLVIVNLQPTKHDRQADLRIHGYVDEVMCRLMKHLGLEIPAWDGPCVLDKALPPLPRPVALKAEPPVHLNGAVHVSYKSKPNSPILHRPPKRVKTEAAPS</sequence>
<keyword id="KW-0007">Acetylation</keyword>
<keyword id="KW-0012">Acyltransferase</keyword>
<keyword id="KW-0156">Chromatin regulator</keyword>
<keyword id="KW-0158">Chromosome</keyword>
<keyword id="KW-0217">Developmental protein</keyword>
<keyword id="KW-0227">DNA damage</keyword>
<keyword id="KW-0234">DNA repair</keyword>
<keyword id="KW-0238">DNA-binding</keyword>
<keyword id="KW-0256">Endoplasmic reticulum</keyword>
<keyword id="KW-0328">Glycosyltransferase</keyword>
<keyword id="KW-1017">Isopeptide bond</keyword>
<keyword id="KW-0479">Metal-binding</keyword>
<keyword id="KW-0520">NAD</keyword>
<keyword id="KW-0548">Nucleotidyltransferase</keyword>
<keyword id="KW-0539">Nucleus</keyword>
<keyword id="KW-0597">Phosphoprotein</keyword>
<keyword id="KW-1185">Reference proteome</keyword>
<keyword id="KW-0694">RNA-binding</keyword>
<keyword id="KW-0779">Telomere</keyword>
<keyword id="KW-0808">Transferase</keyword>
<keyword id="KW-0043">Tumor suppressor</keyword>
<keyword id="KW-0832">Ubl conjugation</keyword>
<keyword id="KW-0862">Zinc</keyword>
<reference key="1">
    <citation type="journal article" date="2004" name="Genome Res.">
        <title>The status, quality, and expansion of the NIH full-length cDNA project: the Mammalian Gene Collection (MGC).</title>
        <authorList>
            <consortium name="The MGC Project Team"/>
        </authorList>
    </citation>
    <scope>NUCLEOTIDE SEQUENCE [LARGE SCALE MRNA]</scope>
    <source>
        <tissue>Limb</tissue>
    </source>
</reference>
<reference key="2">
    <citation type="journal article" date="2005" name="J. Biol. Chem.">
        <title>Mouse Sir2 homolog SIRT6 is a nuclear ADP-ribosyltransferase.</title>
        <authorList>
            <person name="Liszt G."/>
            <person name="Ford E."/>
            <person name="Kurtev M."/>
            <person name="Guarente L."/>
        </authorList>
    </citation>
    <scope>CATALYTIC ACTIVITY</scope>
    <scope>SUBCELLULAR LOCATION</scope>
    <scope>TISSUE SPECIFICITY</scope>
    <scope>DEVELOPMENTAL STAGE</scope>
    <scope>ACTIVE SITE</scope>
    <scope>MUTAGENESIS OF SER-56 AND HIS-133</scope>
</reference>
<reference key="3">
    <citation type="journal article" date="2006" name="Cell">
        <title>Genomic instability and aging-like phenotype in the absence of mammalian SIRT6.</title>
        <authorList>
            <person name="Mostoslavsky R."/>
            <person name="Chua K.F."/>
            <person name="Lombard D.B."/>
            <person name="Pang W.W."/>
            <person name="Fischer M.R."/>
            <person name="Gellon L."/>
            <person name="Liu P."/>
            <person name="Mostoslavsky G."/>
            <person name="Franco S."/>
            <person name="Murphy M.M."/>
            <person name="Mills K.D."/>
            <person name="Patel P."/>
            <person name="Hsu J.T."/>
            <person name="Hong A.L."/>
            <person name="Ford E."/>
            <person name="Cheng H.-L."/>
            <person name="Kennedy C."/>
            <person name="Nunez N."/>
            <person name="Bronson R."/>
            <person name="Frendewey D."/>
            <person name="Auerbach W."/>
            <person name="Valenzuela D."/>
            <person name="Karow M."/>
            <person name="Hottiger M.O."/>
            <person name="Hursting S."/>
            <person name="Barrett J.C."/>
            <person name="Guarente L."/>
            <person name="Mulligan R."/>
            <person name="Demple B."/>
            <person name="Yancopoulos G.D."/>
            <person name="Alt F.W."/>
        </authorList>
    </citation>
    <scope>DISRUPTION PHENOTYPE</scope>
    <scope>FUNCTION</scope>
    <scope>SUBCELLULAR LOCATION</scope>
    <scope>TISSUE SPECIFICITY</scope>
</reference>
<reference key="4">
    <citation type="journal article" date="2009" name="Biochemistry">
        <title>Investigating the ADP-ribosyltransferase activity of sirtuins with NAD analogues and 32P-NAD.</title>
        <authorList>
            <person name="Du J."/>
            <person name="Jiang H."/>
            <person name="Lin H."/>
        </authorList>
    </citation>
    <scope>FUNCTION</scope>
</reference>
<reference key="5">
    <citation type="journal article" date="2009" name="Cell">
        <title>SIRT6 links histone H3 lysine 9 deacetylation to NF-kappaB-dependent gene expression and organismal life span.</title>
        <authorList>
            <person name="Kawahara T.L.A."/>
            <person name="Michishita E."/>
            <person name="Adler A.S."/>
            <person name="Damian M."/>
            <person name="Berber E."/>
            <person name="Lin M."/>
            <person name="McCord R.A."/>
            <person name="Ongaigui K.C.L."/>
            <person name="Boxer L.D."/>
            <person name="Chang H.Y."/>
            <person name="Chua K.F."/>
        </authorList>
    </citation>
    <scope>FUNCTION</scope>
    <scope>INTERACTION WITH RELA</scope>
</reference>
<reference key="6">
    <citation type="journal article" date="2009" name="Cell Cycle">
        <title>The sirtuin SIRT6 deacetylates H3 K56Ac in vivo to promote genomic stability.</title>
        <authorList>
            <person name="Yang B."/>
            <person name="Zwaans B.M.M."/>
            <person name="Eckersdorff M."/>
            <person name="Lombard D.B."/>
        </authorList>
    </citation>
    <scope>FUNCTION</scope>
    <scope>ACTIVE SITE</scope>
    <scope>MUTAGENESIS OF HIS-133</scope>
</reference>
<reference key="7">
    <citation type="journal article" date="2009" name="Nat. Med.">
        <title>Intracellular NAD levels regulate tumor necrosis factor protein synthesis in a sirtuin-dependent manner.</title>
        <authorList>
            <person name="Van Gool F."/>
            <person name="Galli M."/>
            <person name="Gueydan C."/>
            <person name="Kruys V."/>
            <person name="Prevot P.P."/>
            <person name="Bedalov A."/>
            <person name="Mostoslavsky R."/>
            <person name="Alt F.W."/>
            <person name="De Smedt T."/>
            <person name="Leo O."/>
        </authorList>
    </citation>
    <scope>FUNCTION</scope>
</reference>
<reference key="8">
    <citation type="journal article" date="2010" name="Cell">
        <title>The histone deacetylase Sirt6 regulates glucose homeostasis via Hif1alpha.</title>
        <authorList>
            <person name="Zhong L."/>
            <person name="D'Urso A."/>
            <person name="Toiber D."/>
            <person name="Sebastian C."/>
            <person name="Henry R.E."/>
            <person name="Vadysirisack D.D."/>
            <person name="Guimaraes A."/>
            <person name="Marinelli B."/>
            <person name="Wikstrom J.D."/>
            <person name="Nir T."/>
            <person name="Clish C.B."/>
            <person name="Vaitheesvaran B."/>
            <person name="Iliopoulos O."/>
            <person name="Kurland I."/>
            <person name="Dor Y."/>
            <person name="Weissleder R."/>
            <person name="Shirihai O.S."/>
            <person name="Ellisen L.W."/>
            <person name="Espinosa J.M."/>
            <person name="Mostoslavsky R."/>
        </authorList>
    </citation>
    <scope>FUNCTION IN REGULATION OF GLUCOSE HOMEOSTASIS</scope>
</reference>
<reference key="9">
    <citation type="journal article" date="2010" name="Cell Metab.">
        <title>Hepatic-specific disruption of SIRT6 in mice results in fatty liver formation due to enhanced glycolysis and triglyceride synthesis.</title>
        <authorList>
            <person name="Kim H.S."/>
            <person name="Xiao C."/>
            <person name="Wang R.H."/>
            <person name="Lahusen T."/>
            <person name="Xu X."/>
            <person name="Vassilopoulos A."/>
            <person name="Vazquez-Ortiz G."/>
            <person name="Jeong W.I."/>
            <person name="Park O."/>
            <person name="Ki S.H."/>
            <person name="Gao B."/>
            <person name="Deng C.X."/>
        </authorList>
    </citation>
    <scope>FUNCTION</scope>
    <scope>DISRUPTION PHENOTYPE</scope>
</reference>
<reference key="10">
    <citation type="journal article" date="2010" name="J. Biol. Chem.">
        <title>SIRT6 deficiency results in severe hypoglycemia by enhancing both basal and insulin-stimulated glucose uptake in mice.</title>
        <authorList>
            <person name="Xiao C."/>
            <person name="Kim H.S."/>
            <person name="Lahusen T."/>
            <person name="Wang R.H."/>
            <person name="Xu X."/>
            <person name="Gavrilova O."/>
            <person name="Jou W."/>
            <person name="Gius D."/>
            <person name="Deng C.X."/>
        </authorList>
    </citation>
    <scope>FUNCTION</scope>
    <scope>DISRUPTION PHENOTYPE</scope>
</reference>
<reference key="11">
    <citation type="journal article" date="2010" name="Proc. Natl. Acad. Sci. U.S.A.">
        <title>Neural sirtuin 6 (Sirt6) ablation attenuates somatic growth and causes obesity.</title>
        <authorList>
            <person name="Schwer B."/>
            <person name="Schumacher B."/>
            <person name="Lombard D.B."/>
            <person name="Xiao C."/>
            <person name="Kurtev M.V."/>
            <person name="Gao J."/>
            <person name="Schneider J.I."/>
            <person name="Chai H."/>
            <person name="Bronson R.T."/>
            <person name="Tsai L.H."/>
            <person name="Deng C.X."/>
            <person name="Alt F.W."/>
        </authorList>
    </citation>
    <scope>FUNCTION</scope>
    <scope>DISRUPTION PHENOTYPE</scope>
</reference>
<reference key="12">
    <citation type="journal article" date="2011" name="Science">
        <title>SIRT6 promotes DNA repair under stress by activating PARP1.</title>
        <authorList>
            <person name="Mao Z."/>
            <person name="Hine C."/>
            <person name="Tian X."/>
            <person name="Van Meter M."/>
            <person name="Au M."/>
            <person name="Vaidya A."/>
            <person name="Seluanov A."/>
            <person name="Gorbunova V."/>
        </authorList>
    </citation>
    <scope>FUNCTION</scope>
</reference>
<reference key="13">
    <citation type="journal article" date="2012" name="Cell">
        <title>The histone deacetylase SIRT6 is a tumor suppressor that controls cancer metabolism.</title>
        <authorList>
            <person name="Sebastian C."/>
            <person name="Zwaans B.M."/>
            <person name="Silberman D.M."/>
            <person name="Gymrek M."/>
            <person name="Goren A."/>
            <person name="Zhong L."/>
            <person name="Ram O."/>
            <person name="Truelove J."/>
            <person name="Guimaraes A.R."/>
            <person name="Toiber D."/>
            <person name="Cosentino C."/>
            <person name="Greenson J.K."/>
            <person name="MacDonald A.I."/>
            <person name="McGlynn L."/>
            <person name="Maxwell F."/>
            <person name="Edwards J."/>
            <person name="Giacosa S."/>
            <person name="Guccione E."/>
            <person name="Weissleder R."/>
            <person name="Bernstein B.E."/>
            <person name="Regev A."/>
            <person name="Shiels P.G."/>
            <person name="Lombard D.B."/>
            <person name="Mostoslavsky R."/>
        </authorList>
    </citation>
    <scope>FUNCTION</scope>
</reference>
<reference key="14">
    <citation type="journal article" date="2012" name="Nature">
        <title>The sirtuin SIRT6 regulates lifespan in male mice.</title>
        <authorList>
            <person name="Kanfi Y."/>
            <person name="Naiman S."/>
            <person name="Amir G."/>
            <person name="Peshti V."/>
            <person name="Zinman G."/>
            <person name="Nahum L."/>
            <person name="Bar-Joseph Z."/>
            <person name="Cohen H.Y."/>
        </authorList>
    </citation>
    <scope>FUNCTION IN REGULATION OF LIFE SPAN</scope>
</reference>
<reference key="15">
    <citation type="journal article" date="2012" name="Mol. Cell">
        <title>The deacetylase Sirt6 activates the acetyltransferase GCN5 and suppresses hepatic gluconeogenesis.</title>
        <authorList>
            <person name="Dominy J.E. Jr."/>
            <person name="Lee Y."/>
            <person name="Jedrychowski M.P."/>
            <person name="Chim H."/>
            <person name="Jurczak M.J."/>
            <person name="Camporez J.P."/>
            <person name="Ruan H.B."/>
            <person name="Feldman J."/>
            <person name="Pierce K."/>
            <person name="Mostoslavsky R."/>
            <person name="Denu J.M."/>
            <person name="Clish C.B."/>
            <person name="Yang X."/>
            <person name="Shulman G.I."/>
            <person name="Gygi S.P."/>
            <person name="Puigserver P."/>
        </authorList>
    </citation>
    <scope>FUNCTION</scope>
</reference>
<reference key="16">
    <citation type="journal article" date="2013" name="J. Biol. Chem.">
        <title>FoxO3 transcription factor and Sirt6 deacetylase regulate low density lipoprotein (LDL)-cholesterol homeostasis via control of the proprotein convertase subtilisin/kexin type 9 (Pcsk9) gene expression.</title>
        <authorList>
            <person name="Tao R."/>
            <person name="Xiong X."/>
            <person name="DePinho R.A."/>
            <person name="Deng C.X."/>
            <person name="Dong X.C."/>
        </authorList>
    </citation>
    <scope>FUNCTION</scope>
    <scope>DISRUPTION PHENOTYPE</scope>
</reference>
<reference key="17">
    <citation type="journal article" date="2013" name="Mol. Cell">
        <title>SIRT6 recruits SNF2H to DNA break sites, preventing genomic instability through chromatin remodeling.</title>
        <authorList>
            <person name="Toiber D."/>
            <person name="Erdel F."/>
            <person name="Bouazoune K."/>
            <person name="Silberman D.M."/>
            <person name="Zhong L."/>
            <person name="Mulligan P."/>
            <person name="Sebastian C."/>
            <person name="Cosentino C."/>
            <person name="Martinez-Pastor B."/>
            <person name="Giacosa S."/>
            <person name="D'Urso A."/>
            <person name="Naeaer A.M."/>
            <person name="Kingston R."/>
            <person name="Rippe K."/>
            <person name="Mostoslavsky R."/>
        </authorList>
    </citation>
    <scope>FUNCTION</scope>
    <scope>DISRUPTION PHENOTYPE</scope>
</reference>
<reference key="18">
    <citation type="journal article" date="2013" name="Nature">
        <title>SIRT6 regulates TNF-alpha secretion through hydrolysis of long-chain fatty acyl lysine.</title>
        <authorList>
            <person name="Jiang H."/>
            <person name="Khan S."/>
            <person name="Wang Y."/>
            <person name="Charron G."/>
            <person name="He B."/>
            <person name="Sebastian C."/>
            <person name="Du J."/>
            <person name="Kim R."/>
            <person name="Ge E."/>
            <person name="Mostoslavsky R."/>
            <person name="Hang H.C."/>
            <person name="Hao Q."/>
            <person name="Lin H."/>
        </authorList>
    </citation>
    <scope>SUBCELLULAR LOCATION</scope>
</reference>
<reference key="19">
    <citation type="journal article" date="2014" name="Cell">
        <title>Partitioning circadian transcription by SIRT6 leads to segregated control of cellular metabolism.</title>
        <authorList>
            <person name="Masri S."/>
            <person name="Rigor P."/>
            <person name="Cervantes M."/>
            <person name="Ceglia N."/>
            <person name="Sebastian C."/>
            <person name="Xiao C."/>
            <person name="Roqueta-Rivera M."/>
            <person name="Deng C."/>
            <person name="Osborne T.F."/>
            <person name="Mostoslavsky R."/>
            <person name="Baldi P."/>
            <person name="Sassone-Corsi P."/>
        </authorList>
    </citation>
    <scope>FUNCTION</scope>
    <scope>INTERACTION WITH THE CLOCK-BMAL1 COMPLEX</scope>
</reference>
<reference key="20">
    <citation type="journal article" date="2014" name="Nat. Commun.">
        <title>SIRT6 represses LINE1 retrotransposons by ribosylating KAP1 but this repression fails with stress and age.</title>
        <authorList>
            <person name="Van Meter M."/>
            <person name="Kashyap M."/>
            <person name="Rezazadeh S."/>
            <person name="Geneva A.J."/>
            <person name="Morello T.D."/>
            <person name="Seluanov A."/>
            <person name="Gorbunova V."/>
        </authorList>
    </citation>
    <scope>FUNCTION</scope>
    <scope>CATALYTIC ACTIVITY</scope>
    <scope>MUTAGENESIS OF SER-56; GLY-60 AND ARG-65</scope>
</reference>
<reference key="21">
    <citation type="journal article" date="2014" name="Proc. Natl. Acad. Sci. U.S.A.">
        <title>Tumor suppressor p53 cooperates with SIRT6 to regulate gluconeogenesis by promoting FoxO1 nuclear exclusion.</title>
        <authorList>
            <person name="Zhang P."/>
            <person name="Tu B."/>
            <person name="Wang H."/>
            <person name="Cao Z."/>
            <person name="Tang M."/>
            <person name="Zhang C."/>
            <person name="Gu B."/>
            <person name="Li Z."/>
            <person name="Wang L."/>
            <person name="Yang Y."/>
            <person name="Zhao Y."/>
            <person name="Wang H."/>
            <person name="Luo J."/>
            <person name="Deng C.X."/>
            <person name="Gao B."/>
            <person name="Roeder R.G."/>
            <person name="Zhu W.G."/>
        </authorList>
    </citation>
    <scope>FUNCTION</scope>
</reference>
<reference key="22">
    <citation type="journal article" date="2015" name="Nat. Cell Biol.">
        <title>The histone deacetylase SIRT6 controls embryonic stem cell fate via TET-mediated production of 5-hydroxymethylcytosine.</title>
        <authorList>
            <person name="Etchegaray J.P."/>
            <person name="Chavez L."/>
            <person name="Huang Y."/>
            <person name="Ross K.N."/>
            <person name="Choi J."/>
            <person name="Martinez-Pastor B."/>
            <person name="Walsh R.M."/>
            <person name="Sommer C.A."/>
            <person name="Lienhard M."/>
            <person name="Gladden A."/>
            <person name="Kugel S."/>
            <person name="Silberman D.M."/>
            <person name="Ramaswamy S."/>
            <person name="Mostoslavsky G."/>
            <person name="Hochedlinger K."/>
            <person name="Goren A."/>
            <person name="Rao A."/>
            <person name="Mostoslavsky R."/>
        </authorList>
    </citation>
    <scope>FUNCTION</scope>
</reference>
<reference key="23">
    <citation type="journal article" date="2016" name="Cell">
        <title>SIRT6 suppresses pancreatic cancer through control of Lin28b.</title>
        <authorList>
            <person name="Kugel S."/>
            <person name="Sebastian C."/>
            <person name="Fitamant J."/>
            <person name="Ross K.N."/>
            <person name="Saha S.K."/>
            <person name="Jain E."/>
            <person name="Gladden A."/>
            <person name="Arora K.S."/>
            <person name="Kato Y."/>
            <person name="Rivera M.N."/>
            <person name="Ramaswamy S."/>
            <person name="Sadreyev R.I."/>
            <person name="Goren A."/>
            <person name="Deshpande V."/>
            <person name="Bardeesy N."/>
            <person name="Mostoslavsky R."/>
        </authorList>
    </citation>
    <scope>FUNCTION</scope>
</reference>
<reference key="24">
    <citation type="journal article" date="2016" name="Nat. Chem. Biol.">
        <title>Identifying the functional contribution of the defatty-acylase activity of SIRT6.</title>
        <authorList>
            <person name="Zhang X."/>
            <person name="Khan S."/>
            <person name="Jiang H."/>
            <person name="Antonyak M.A."/>
            <person name="Chen X."/>
            <person name="Spiegelman N.A."/>
            <person name="Shrimp J.H."/>
            <person name="Cerione R.A."/>
            <person name="Lin H."/>
        </authorList>
    </citation>
    <scope>FUNCTION</scope>
</reference>
<reference key="25">
    <citation type="journal article" date="2016" name="Sci. Rep.">
        <title>Insulin secretion impairment in Sirt6 knockout pancreatic beta cells is mediated by suppression of the FoxO1-Pdx1-Glut2 pathway.</title>
        <authorList>
            <person name="Song M.Y."/>
            <person name="Wang J."/>
            <person name="Ka S.O."/>
            <person name="Bae E.J."/>
            <person name="Park B.H."/>
        </authorList>
    </citation>
    <scope>FUNCTION</scope>
    <scope>DISRUPTION PHENOTYPE</scope>
    <scope>MUTAGENESIS OF TYR-133</scope>
</reference>
<reference key="26">
    <citation type="journal article" date="2017" name="Cell Rep.">
        <title>SIRT6 is essential for adipocyte differentiation by regulating mitotic clonal expansion.</title>
        <authorList>
            <person name="Chen Q."/>
            <person name="Hao W."/>
            <person name="Xiao C."/>
            <person name="Wang R."/>
            <person name="Xu X."/>
            <person name="Lu H."/>
            <person name="Chen W."/>
            <person name="Deng C.X."/>
        </authorList>
    </citation>
    <scope>FUNCTION</scope>
    <scope>INTERACTION WITH CSNK2A2</scope>
</reference>
<reference key="27">
    <citation type="journal article" date="2017" name="Cell Rep.">
        <title>Cold-inducible SIRT6 regulates thermogenesis of brown and beige fat.</title>
        <authorList>
            <person name="Yao L."/>
            <person name="Cui X."/>
            <person name="Chen Q."/>
            <person name="Yang X."/>
            <person name="Fang F."/>
            <person name="Zhang J."/>
            <person name="Liu G."/>
            <person name="Jin W."/>
            <person name="Chang Y."/>
        </authorList>
    </citation>
    <scope>FUNCTION</scope>
    <scope>INDUCTION BY COLD</scope>
    <scope>DISRUPTION PHENOTYPE</scope>
</reference>
<reference key="28">
    <citation type="journal article" date="2017" name="Diabetes">
        <title>Fat-Specific Sirt6 Ablation Sensitizes Mice to High-Fat Diet-Induced Obesity and Insulin Resistance by Inhibiting Lipolysis.</title>
        <authorList>
            <person name="Kuang J."/>
            <person name="Zhang Y."/>
            <person name="Liu Q."/>
            <person name="Shen J."/>
            <person name="Pu S."/>
            <person name="Cheng S."/>
            <person name="Chen L."/>
            <person name="Li H."/>
            <person name="Wu T."/>
            <person name="Li R."/>
            <person name="Li Y."/>
            <person name="Zou M."/>
            <person name="Zhang Z."/>
            <person name="Jiang W."/>
            <person name="Xu G."/>
            <person name="Qu A."/>
            <person name="Xie W."/>
            <person name="He J."/>
        </authorList>
    </citation>
    <scope>FUNCTION</scope>
    <scope>DISRUPTION PHENOTYPE</scope>
</reference>
<reference key="29">
    <citation type="journal article" date="2017" name="Nat. Commun.">
        <title>Sirt6 deficiency exacerbates podocyte injury and proteinuria through targeting Notch signaling.</title>
        <authorList>
            <person name="Liu M."/>
            <person name="Liang K."/>
            <person name="Zhen J."/>
            <person name="Zhou M."/>
            <person name="Wang X."/>
            <person name="Wang Z."/>
            <person name="Wei X."/>
            <person name="Zhang Y."/>
            <person name="Sun Y."/>
            <person name="Zhou Z."/>
            <person name="Su H."/>
            <person name="Zhang C."/>
            <person name="Li N."/>
            <person name="Gao C."/>
            <person name="Peng J."/>
            <person name="Yi F."/>
        </authorList>
    </citation>
    <scope>FUNCTION</scope>
    <scope>DISRUPTION PHENOTYPE</scope>
</reference>
<reference key="30">
    <citation type="journal article" date="2017" name="PLoS ONE">
        <title>Characterization of physiological defects in adult SIRT6-/- mice.</title>
        <authorList>
            <person name="Peshti V."/>
            <person name="Obolensky A."/>
            <person name="Nahum L."/>
            <person name="Kanfi Y."/>
            <person name="Rathaus M."/>
            <person name="Avraham M."/>
            <person name="Tinman S."/>
            <person name="Alt F.W."/>
            <person name="Banin E."/>
            <person name="Cohen H.Y."/>
        </authorList>
    </citation>
    <scope>DISRUPTION PHENOTYPE</scope>
</reference>
<reference key="31">
    <citation type="journal article" date="2018" name="Elife">
        <title>Haploinsufficiency of Trp53 dramatically extends the lifespan of Sirt6-deficient mice.</title>
        <authorList>
            <person name="Ghosh S."/>
            <person name="Wong S.K."/>
            <person name="Jiang Z."/>
            <person name="Liu B."/>
            <person name="Wang Y."/>
            <person name="Hao Q."/>
            <person name="Gorbunova V."/>
            <person name="Liu X."/>
            <person name="Zhou Z."/>
        </authorList>
    </citation>
    <scope>DISRUPTION PHENOTYPE</scope>
</reference>
<reference key="32">
    <citation type="journal article" date="2018" name="Genes Dev.">
        <title>An inactivating mutation in the histone deacetylase SIRT6 causes human perinatal lethality.</title>
        <authorList>
            <person name="Ferrer C.M."/>
            <person name="Alders M."/>
            <person name="Postma A.V."/>
            <person name="Park S."/>
            <person name="Klein M.A."/>
            <person name="Cetinbas M."/>
            <person name="Pajkrt E."/>
            <person name="Glas A."/>
            <person name="van Koningsbruggen S."/>
            <person name="Christoffels V.M."/>
            <person name="Mannens M.M.A.M."/>
            <person name="Knegt L."/>
            <person name="Etchegaray J.P."/>
            <person name="Sadreyev R.I."/>
            <person name="Denu J.M."/>
            <person name="Mostoslavsky G."/>
            <person name="van Maarle M.C."/>
            <person name="Mostoslavsky R."/>
        </authorList>
    </citation>
    <scope>FUNCTION</scope>
    <scope>CATALYTIC ACTIVITY</scope>
    <scope>MUTAGENESIS OF ASP-63</scope>
</reference>
<reference key="33">
    <citation type="journal article" date="2018" name="Sci. Rep.">
        <title>SIRT6 facilitates directional telomere movement upon oxidative damage.</title>
        <authorList>
            <person name="Gao Y."/>
            <person name="Tan J."/>
            <person name="Jin J."/>
            <person name="Ma H."/>
            <person name="Chen X."/>
            <person name="Leger B."/>
            <person name="Xu J."/>
            <person name="Spagnol S.T."/>
            <person name="Dahl K.N."/>
            <person name="Levine A.S."/>
            <person name="Liu Y."/>
            <person name="Lan L."/>
        </authorList>
    </citation>
    <scope>FUNCTION</scope>
    <scope>CATALYTIC ACTIVITY</scope>
    <scope>MUTAGENESIS OF HIS-133</scope>
</reference>
<reference key="34">
    <citation type="journal article" date="2019" name="Biochem. Biophys. Res. Commun.">
        <title>Sirt6 deacetylase activity regulates circadian rhythms via Per2.</title>
        <authorList>
            <person name="Sun S."/>
            <person name="Liu Z."/>
            <person name="Feng Y."/>
            <person name="Shi L."/>
            <person name="Cao X."/>
            <person name="Cai Y."/>
            <person name="Liu B."/>
        </authorList>
    </citation>
    <scope>FUNCTION</scope>
</reference>
<reference key="35">
    <citation type="journal article" date="2019" name="Cell">
        <title>SIRT6 is responsible for more efficient DNA double-strand break repair in long-lived species.</title>
        <authorList>
            <person name="Tian X."/>
            <person name="Firsanov D."/>
            <person name="Zhang Z."/>
            <person name="Cheng Y."/>
            <person name="Luo L."/>
            <person name="Tombline G."/>
            <person name="Tan R."/>
            <person name="Simon M."/>
            <person name="Henderson S."/>
            <person name="Steffan J."/>
            <person name="Goldfarb A."/>
            <person name="Tam J."/>
            <person name="Zheng K."/>
            <person name="Cornwell A."/>
            <person name="Johnson A."/>
            <person name="Yang J.N."/>
            <person name="Mao Z."/>
            <person name="Manta B."/>
            <person name="Dang W."/>
            <person name="Zhang Z."/>
            <person name="Vijg J."/>
            <person name="Wolfe A."/>
            <person name="Moody K."/>
            <person name="Kennedy B.K."/>
            <person name="Bohmann D."/>
            <person name="Gladyshev V.N."/>
            <person name="Seluanov A."/>
            <person name="Gorbunova V."/>
        </authorList>
    </citation>
    <scope>FUNCTION</scope>
    <scope>CATALYTIC ACTIVITY</scope>
    <scope>MUTAGENESIS OF ARG-235; GLN-249 AND 260-GLU--ARG-264</scope>
</reference>
<reference key="36">
    <citation type="journal article" date="2019" name="Cell Metab.">
        <title>LINE1 derepression in aged wild-type and SIRT6-deficient mice drives inflammation.</title>
        <authorList>
            <person name="Simon M."/>
            <person name="Van Meter M."/>
            <person name="Ablaeva J."/>
            <person name="Ke Z."/>
            <person name="Gonzalez R.S."/>
            <person name="Taguchi T."/>
            <person name="De Cecco M."/>
            <person name="Leonova K.I."/>
            <person name="Kogan V."/>
            <person name="Helfand S.L."/>
            <person name="Neretti N."/>
            <person name="Roichman A."/>
            <person name="Cohen H.Y."/>
            <person name="Meer M.V."/>
            <person name="Gladyshev V.N."/>
            <person name="Antoch M.P."/>
            <person name="Gudkov A.V."/>
            <person name="Sedivy J.M."/>
            <person name="Seluanov A."/>
            <person name="Gorbunova V."/>
        </authorList>
    </citation>
    <scope>FUNCTION</scope>
    <scope>DISRUPTION PHENOTYPE</scope>
</reference>
<reference key="37">
    <citation type="journal article" date="2019" name="Cell Rep.">
        <title>SIRT6 promotes hepatic beta-oxidation via activation of PPARalpha.</title>
        <authorList>
            <person name="Naiman S."/>
            <person name="Huynh F.K."/>
            <person name="Gil R."/>
            <person name="Glick Y."/>
            <person name="Shahar Y."/>
            <person name="Touitou N."/>
            <person name="Nahum L."/>
            <person name="Avivi M.Y."/>
            <person name="Roichman A."/>
            <person name="Kanfi Y."/>
            <person name="Gertler A.A."/>
            <person name="Doniger T."/>
            <person name="Ilkayeva O.R."/>
            <person name="Abramovich I."/>
            <person name="Yaron O."/>
            <person name="Lerrer B."/>
            <person name="Gottlieb E."/>
            <person name="Harris R.A."/>
            <person name="Gerber D."/>
            <person name="Hirschey M.D."/>
            <person name="Cohen H.Y."/>
        </authorList>
    </citation>
    <scope>FUNCTION</scope>
</reference>
<reference key="38">
    <citation type="journal article" date="2019" name="J. Biol. Chem.">
        <title>Hepatocyte-specific Sirt6 deficiency impairs ketogenesis.</title>
        <authorList>
            <person name="Chen L."/>
            <person name="Liu Q."/>
            <person name="Tang Q."/>
            <person name="Kuang J."/>
            <person name="Li H."/>
            <person name="Pu S."/>
            <person name="Wu T."/>
            <person name="Yang X."/>
            <person name="Li R."/>
            <person name="Zhang J."/>
            <person name="Zhang Z."/>
            <person name="Huang Y."/>
            <person name="Li Y."/>
            <person name="Zou M."/>
            <person name="Jiang W."/>
            <person name="Li T."/>
            <person name="Gong M."/>
            <person name="Zhang L."/>
            <person name="Wang H."/>
            <person name="Qu A."/>
            <person name="Xie W."/>
            <person name="He J."/>
        </authorList>
    </citation>
    <scope>FUNCTION</scope>
    <scope>INDUCTION</scope>
    <scope>DISRUPTION PHENOTYPE</scope>
</reference>
<reference key="39">
    <citation type="journal article" date="2019" name="Mol. Cell">
        <title>The histone deacetylase SIRT6 restrains transcription elongation via promoter-proximal pausing.</title>
        <authorList>
            <person name="Etchegaray J.P."/>
            <person name="Zhong L."/>
            <person name="Li C."/>
            <person name="Henriques T."/>
            <person name="Ablondi E."/>
            <person name="Nakadai T."/>
            <person name="Van Rechem C."/>
            <person name="Ferrer C."/>
            <person name="Ross K.N."/>
            <person name="Choi J.E."/>
            <person name="Samarakkody A."/>
            <person name="Ji F."/>
            <person name="Chang A."/>
            <person name="Sadreyev R.I."/>
            <person name="Ramaswamy S."/>
            <person name="Nechaev S."/>
            <person name="Whetstine J.R."/>
            <person name="Roeder R.G."/>
            <person name="Adelman K."/>
            <person name="Goren A."/>
            <person name="Mostoslavsky R."/>
        </authorList>
    </citation>
    <scope>FUNCTION</scope>
    <scope>CATALYTIC ACTIVITY</scope>
</reference>
<reference key="40">
    <citation type="journal article" date="2019" name="Mol. Cell">
        <title>Non-canonical mTORC2 signaling regulates brown adipocyte lipid catabolism through SIRT6-FoxO1.</title>
        <authorList>
            <person name="Jung S.M."/>
            <person name="Hung C.M."/>
            <person name="Hildebrand S.R."/>
            <person name="Sanchez-Gurmaches J."/>
            <person name="Martinez-Pastor B."/>
            <person name="Gengatharan J.M."/>
            <person name="Wallace M."/>
            <person name="Mukhopadhyay D."/>
            <person name="Martinez Calejman C."/>
            <person name="Luciano A.K."/>
            <person name="Hsiao W.Y."/>
            <person name="Tang Y."/>
            <person name="Li H."/>
            <person name="Daniels D.L."/>
            <person name="Mostoslavsky R."/>
            <person name="Metallo C.M."/>
            <person name="Guertin D.A."/>
        </authorList>
    </citation>
    <scope>FUNCTION</scope>
    <scope>INTERACTION WITH MTORC2</scope>
</reference>
<reference key="41">
    <citation type="journal article" date="2019" name="Nucleic Acids Res.">
        <title>SIRT6 promotes transcription of a subset of NRF2 targets by mono-ADP-ribosylating BAF170.</title>
        <authorList>
            <person name="Rezazadeh S."/>
            <person name="Yang D."/>
            <person name="Tombline G."/>
            <person name="Simon M."/>
            <person name="Regan S.P."/>
            <person name="Seluanov A."/>
            <person name="Gorbunova V."/>
        </authorList>
    </citation>
    <scope>FUNCTION</scope>
    <scope>CATALYTIC ACTIVITY</scope>
    <scope>ACTIVE SITE</scope>
    <scope>MUTAGENESIS OF GLY-60; ARG-65 AND HIS-133</scope>
</reference>
<reference key="42">
    <citation type="journal article" date="2020" name="Aging (Albany NY)">
        <title>SIRT6 mono-ADP ribosylates KDM2A to locally increase H3K36me2 at DNA damage sites to inhibit transcription and promote repair.</title>
        <authorList>
            <person name="Rezazadeh S."/>
            <person name="Yang D."/>
            <person name="Biashad S.A."/>
            <person name="Firsanov D."/>
            <person name="Takasugi M."/>
            <person name="Gilbert M."/>
            <person name="Tombline G."/>
            <person name="Bhanu N.V."/>
            <person name="Garcia B.A."/>
            <person name="Seluanov A."/>
            <person name="Gorbunova V."/>
        </authorList>
    </citation>
    <scope>FUNCTION</scope>
    <scope>CATALYTIC ACTIVITY</scope>
</reference>
<reference key="43">
    <citation type="journal article" date="2020" name="Elife">
        <title>Synergy between SIRT1 and SIRT6 helps recognize DNA breaks and potentiates the DNA damage response and repair in humans and mice.</title>
        <authorList>
            <person name="Meng F."/>
            <person name="Qian M."/>
            <person name="Peng B."/>
            <person name="Peng L."/>
            <person name="Wang X."/>
            <person name="Zheng K."/>
            <person name="Liu Z."/>
            <person name="Tang X."/>
            <person name="Zhang S."/>
            <person name="Sun S."/>
            <person name="Cao X."/>
            <person name="Pang Q."/>
            <person name="Zhao B."/>
            <person name="Ma W."/>
            <person name="Songyang Z."/>
            <person name="Xu B."/>
            <person name="Zhu W.G."/>
            <person name="Xu X."/>
            <person name="Liu B."/>
        </authorList>
    </citation>
    <scope>FUNCTION</scope>
    <scope>DISRUPTION PHENOTYPE</scope>
</reference>
<reference key="44">
    <citation type="journal article" date="2021" name="Nat. Commun.">
        <title>Restoration of energy homeostasis by SIRT6 extends healthy lifespan.</title>
        <authorList>
            <person name="Roichman A."/>
            <person name="Elhanati S."/>
            <person name="Aon M.A."/>
            <person name="Abramovich I."/>
            <person name="Di Francesco A."/>
            <person name="Shahar Y."/>
            <person name="Avivi M.Y."/>
            <person name="Shurgi M."/>
            <person name="Rubinstein A."/>
            <person name="Wiesner Y."/>
            <person name="Shuchami A."/>
            <person name="Petrover Z."/>
            <person name="Lebenthal-Loinger I."/>
            <person name="Yaron O."/>
            <person name="Lyashkov A."/>
            <person name="Ubaida-Mohien C."/>
            <person name="Kanfi Y."/>
            <person name="Lerrer B."/>
            <person name="Fernandez-Marcos P.J."/>
            <person name="Serrano M."/>
            <person name="Gottlieb E."/>
            <person name="de Cabo R."/>
            <person name="Cohen H.Y."/>
        </authorList>
    </citation>
    <scope>FUNCTION</scope>
</reference>
<evidence type="ECO:0000250" key="1">
    <source>
        <dbReference type="UniProtKB" id="Q8N6T7"/>
    </source>
</evidence>
<evidence type="ECO:0000255" key="2">
    <source>
        <dbReference type="PROSITE-ProRule" id="PRU00236"/>
    </source>
</evidence>
<evidence type="ECO:0000256" key="3">
    <source>
        <dbReference type="SAM" id="MobiDB-lite"/>
    </source>
</evidence>
<evidence type="ECO:0000269" key="4">
    <source>
    </source>
</evidence>
<evidence type="ECO:0000269" key="5">
    <source>
    </source>
</evidence>
<evidence type="ECO:0000269" key="6">
    <source>
    </source>
</evidence>
<evidence type="ECO:0000269" key="7">
    <source>
    </source>
</evidence>
<evidence type="ECO:0000269" key="8">
    <source>
    </source>
</evidence>
<evidence type="ECO:0000269" key="9">
    <source>
    </source>
</evidence>
<evidence type="ECO:0000269" key="10">
    <source>
    </source>
</evidence>
<evidence type="ECO:0000269" key="11">
    <source>
    </source>
</evidence>
<evidence type="ECO:0000269" key="12">
    <source>
    </source>
</evidence>
<evidence type="ECO:0000269" key="13">
    <source>
    </source>
</evidence>
<evidence type="ECO:0000269" key="14">
    <source>
    </source>
</evidence>
<evidence type="ECO:0000269" key="15">
    <source>
    </source>
</evidence>
<evidence type="ECO:0000269" key="16">
    <source>
    </source>
</evidence>
<evidence type="ECO:0000269" key="17">
    <source>
    </source>
</evidence>
<evidence type="ECO:0000269" key="18">
    <source>
    </source>
</evidence>
<evidence type="ECO:0000269" key="19">
    <source>
    </source>
</evidence>
<evidence type="ECO:0000269" key="20">
    <source>
    </source>
</evidence>
<evidence type="ECO:0000269" key="21">
    <source>
    </source>
</evidence>
<evidence type="ECO:0000269" key="22">
    <source>
    </source>
</evidence>
<evidence type="ECO:0000269" key="23">
    <source>
    </source>
</evidence>
<evidence type="ECO:0000269" key="24">
    <source>
    </source>
</evidence>
<evidence type="ECO:0000269" key="25">
    <source>
    </source>
</evidence>
<evidence type="ECO:0000269" key="26">
    <source>
    </source>
</evidence>
<evidence type="ECO:0000269" key="27">
    <source>
    </source>
</evidence>
<evidence type="ECO:0000269" key="28">
    <source>
    </source>
</evidence>
<evidence type="ECO:0000269" key="29">
    <source>
    </source>
</evidence>
<evidence type="ECO:0000269" key="30">
    <source>
    </source>
</evidence>
<evidence type="ECO:0000269" key="31">
    <source>
    </source>
</evidence>
<evidence type="ECO:0000269" key="32">
    <source>
    </source>
</evidence>
<evidence type="ECO:0000269" key="33">
    <source>
    </source>
</evidence>
<evidence type="ECO:0000269" key="34">
    <source>
    </source>
</evidence>
<evidence type="ECO:0000269" key="35">
    <source>
    </source>
</evidence>
<evidence type="ECO:0000269" key="36">
    <source>
    </source>
</evidence>
<evidence type="ECO:0000269" key="37">
    <source>
    </source>
</evidence>
<evidence type="ECO:0000269" key="38">
    <source>
    </source>
</evidence>
<evidence type="ECO:0000269" key="39">
    <source>
    </source>
</evidence>
<evidence type="ECO:0000269" key="40">
    <source>
    </source>
</evidence>
<evidence type="ECO:0000269" key="41">
    <source>
    </source>
</evidence>
<evidence type="ECO:0000269" key="42">
    <source>
    </source>
</evidence>
<evidence type="ECO:0000269" key="43">
    <source>
    </source>
</evidence>
<evidence type="ECO:0000269" key="44">
    <source>
    </source>
</evidence>
<evidence type="ECO:0000269" key="45">
    <source>
    </source>
</evidence>
<evidence type="ECO:0000269" key="46">
    <source>
    </source>
</evidence>
<evidence type="ECO:0000303" key="47">
    <source>
    </source>
</evidence>
<evidence type="ECO:0000305" key="48"/>
<evidence type="ECO:0000305" key="49">
    <source>
    </source>
</evidence>
<evidence type="ECO:0000305" key="50">
    <source>
    </source>
</evidence>
<evidence type="ECO:0000305" key="51">
    <source>
    </source>
</evidence>
<evidence type="ECO:0000305" key="52">
    <source>
    </source>
</evidence>
<evidence type="ECO:0000312" key="53">
    <source>
        <dbReference type="MGI" id="MGI:1354161"/>
    </source>
</evidence>
<comment type="function">
    <text evidence="1 4 5 6 7 8 9 10 11 12 13 14 15 16 17 19 20 21 22 23 24 25 26 27 28 29 31 32 34 35 37 38 39 40 41 42 43 44 45 46">NAD-dependent protein deacetylase, deacylase and mono-ADP-ribosyltransferase that plays an essential role in DNA damage repair, telomere maintenance, metabolic homeostasis, inflammation, tumorigenesis and aging (PubMed:16439206, PubMed:19135889, PubMed:19220062, PubMed:19597350, PubMed:20141841, PubMed:23217706, PubMed:23911928, PubMed:27180906, PubMed:29599436). Displays protein-lysine deacetylase or defatty-acylase (demyristoylase and depalmitoylase) activity, depending on the context (By similarity). Acts as a key histone deacetylase by catalyzing deacetylation of histone H3 at 'Lys-9', 'Lys-18' and 'Lys-56' (H3K9ac, H3K18ac and H3K56ac, respectively), suppressing target gene expression of several transcription factors, including NF-kappa-B (PubMed:19135889, PubMed:19597350, PubMed:20816089, PubMed:21098266, PubMed:25915124, PubMed:28871079, PubMed:31002797, PubMed:31399344). Acts as an inhibitor of transcription elongation by mediating deacetylation of H3K9ac and H3K56ac, preventing release of NELFE from chromatin and causing transcriptional pausing (PubMed:31399344). Involved in DNA repair by promoting double-strand break (DSB) repair: acts as a DSB sensor by recognizing and binding DSB sites, leading to (1) recruitment of DNA repair proteins, such as SMARCA5/SNF2H, and (2) deacetylation of histone H3K9ac and H3K56ac (PubMed:32538779). SIRT6 participation to DSB repair is probably involved in extension of life span (PubMed:22367546, PubMed:31002797). Also promotes DNA repair by deacetylating non-histone proteins, such as DDB2 and p53/TP53 (By similarity). Specifically deacetylates H3K18ac at pericentric heterochromatin, thereby maintaining pericentric heterochromatin silencing at centromeres and protecting against genomic instability and cellular senescence (By similarity). Involved in telomere maintenance by catalyzing deacetylation of histone H3 in telomeric chromatin, regulating telomere position effect and telomere movement in response to DNA damage (PubMed:29599436). Required for embryonic stem cell differentiation by mediating histone deacetylation of H3K9ac (PubMed:25915124, PubMed:29555651). Plays a major role in metabolism by regulating processes such as glycolysis, gluconeogenesis, insulin secretion and lipid metabolism (PubMed:20141841, PubMed:20816089, PubMed:20847051, PubMed:21098266, PubMed:23974119, PubMed:27457971, PubMed:28250020, PubMed:28355567, PubMed:34050173). Inhibits glycolysis via histone deacetylase activity and by acting as a corepressor of the transcription factor HIF1A, thereby controlling the expression of multiple glycolytic genes (PubMed:20141841). Has tumor suppressor activity by repressing glycolysis, thereby inhibiting the Warburg effect (PubMed:23217706). Also regulates glycolysis and tumorigenesis by mediating deacetylation and nuclear export of non-histone proteins, such as isoform M2 of PKM (PKM2) (By similarity). Acts as a negative regulator of gluconeogenesis by mediating deacetylation of non-histone proteins, such as FOXO1 and KAT2A/GCN5 (PubMed:23142079, PubMed:25009184). Promotes beta-oxidation of fatty acids during fasting by catalyzing deacetylation of NCOA2, inducing coactivation of PPARA (PubMed:31851938). Acts as a regulator of lipid catabolism in brown adipocytes, both by catalyzing deacetylation of histones and non-histone proteins, such as FOXO1 (PubMed:28723567, PubMed:31442424). Also acts as a regulator of circadian rhythms, both by regulating expression of clock-controlled genes involved in lipid and carbohydrate metabolism, and by catalyzing deacetylation of PER2 (PubMed:25083875, PubMed:30782483). The defatty-acylase activity is specifically involved in regulation of protein secretion (PubMed:19151729, PubMed:27322069). Has high activity toward long-chain fatty acyl groups and mediates protein-lysine demyristoylation and depalmitoylation of target proteins, such as RRAS2 and TNF, thereby regulating their secretion (By similarity). Also acts as a mono-ADP-ribosyltransferase by mediating mono-ADP-ribosylation of PARP1, TRIM28/KAP1 or SMARCC2/BAF170 (PubMed:15795229, PubMed:21680843, PubMed:25247314, PubMed:31216030). Mono-ADP-ribosyltransferase activity is involved in DNA repair, cellular senescence, repression of LINE-1 retrotransposon elements and regulation of transcription (PubMed:21680843, PubMed:25247314, PubMed:30853213, PubMed:31216030, PubMed:32584788).</text>
</comment>
<comment type="catalytic activity">
    <reaction evidence="2 4 34 35 39 41">
        <text>N(6)-acetyl-L-lysyl-[protein] + NAD(+) + H2O = 2''-O-acetyl-ADP-D-ribose + nicotinamide + L-lysyl-[protein]</text>
        <dbReference type="Rhea" id="RHEA:43636"/>
        <dbReference type="Rhea" id="RHEA-COMP:9752"/>
        <dbReference type="Rhea" id="RHEA-COMP:10731"/>
        <dbReference type="ChEBI" id="CHEBI:15377"/>
        <dbReference type="ChEBI" id="CHEBI:17154"/>
        <dbReference type="ChEBI" id="CHEBI:29969"/>
        <dbReference type="ChEBI" id="CHEBI:57540"/>
        <dbReference type="ChEBI" id="CHEBI:61930"/>
        <dbReference type="ChEBI" id="CHEBI:83767"/>
        <dbReference type="EC" id="2.3.1.286"/>
    </reaction>
    <physiologicalReaction direction="left-to-right" evidence="4 34 35 39 41">
        <dbReference type="Rhea" id="RHEA:43637"/>
    </physiologicalReaction>
</comment>
<comment type="catalytic activity">
    <reaction evidence="1">
        <text>N(6)-tetradecanoyl-L-lysyl-[protein] + NAD(+) + H2O = 2''-O-tetradecanoyl-ADP-D-ribose + nicotinamide + L-lysyl-[protein]</text>
        <dbReference type="Rhea" id="RHEA:70567"/>
        <dbReference type="Rhea" id="RHEA-COMP:9752"/>
        <dbReference type="Rhea" id="RHEA-COMP:15437"/>
        <dbReference type="ChEBI" id="CHEBI:15377"/>
        <dbReference type="ChEBI" id="CHEBI:17154"/>
        <dbReference type="ChEBI" id="CHEBI:29969"/>
        <dbReference type="ChEBI" id="CHEBI:57540"/>
        <dbReference type="ChEBI" id="CHEBI:141129"/>
        <dbReference type="ChEBI" id="CHEBI:189674"/>
    </reaction>
    <physiologicalReaction direction="left-to-right" evidence="1">
        <dbReference type="Rhea" id="RHEA:70568"/>
    </physiologicalReaction>
</comment>
<comment type="catalytic activity">
    <reaction evidence="1">
        <text>N(6)-hexadecanoyl-L-lysyl-[protein] + NAD(+) + H2O = 2''-O-hexadecanoyl-ADP-D-ribose + nicotinamide + L-lysyl-[protein]</text>
        <dbReference type="Rhea" id="RHEA:70563"/>
        <dbReference type="Rhea" id="RHEA-COMP:9752"/>
        <dbReference type="Rhea" id="RHEA-COMP:14175"/>
        <dbReference type="ChEBI" id="CHEBI:15377"/>
        <dbReference type="ChEBI" id="CHEBI:17154"/>
        <dbReference type="ChEBI" id="CHEBI:29969"/>
        <dbReference type="ChEBI" id="CHEBI:57540"/>
        <dbReference type="ChEBI" id="CHEBI:138936"/>
        <dbReference type="ChEBI" id="CHEBI:189673"/>
    </reaction>
    <physiologicalReaction direction="left-to-right" evidence="1">
        <dbReference type="Rhea" id="RHEA:70564"/>
    </physiologicalReaction>
</comment>
<comment type="catalytic activity">
    <reaction evidence="23 40">
        <text>L-lysyl-[protein] + NAD(+) = N(6)-(ADP-D-ribosyl)-L-lysyl-[protein] + nicotinamide + H(+)</text>
        <dbReference type="Rhea" id="RHEA:58220"/>
        <dbReference type="Rhea" id="RHEA-COMP:9752"/>
        <dbReference type="Rhea" id="RHEA-COMP:15088"/>
        <dbReference type="ChEBI" id="CHEBI:15378"/>
        <dbReference type="ChEBI" id="CHEBI:17154"/>
        <dbReference type="ChEBI" id="CHEBI:29969"/>
        <dbReference type="ChEBI" id="CHEBI:57540"/>
        <dbReference type="ChEBI" id="CHEBI:142515"/>
    </reaction>
    <physiologicalReaction direction="left-to-right" evidence="23 40">
        <dbReference type="Rhea" id="RHEA:58221"/>
    </physiologicalReaction>
</comment>
<comment type="catalytic activity">
    <reaction evidence="52">
        <text>L-arginyl-[protein] + NAD(+) = N(omega)-(ADP-D-ribosyl)-L-arginyl-[protein] + nicotinamide + H(+)</text>
        <dbReference type="Rhea" id="RHEA:19149"/>
        <dbReference type="Rhea" id="RHEA-COMP:10532"/>
        <dbReference type="Rhea" id="RHEA-COMP:15087"/>
        <dbReference type="ChEBI" id="CHEBI:15378"/>
        <dbReference type="ChEBI" id="CHEBI:17154"/>
        <dbReference type="ChEBI" id="CHEBI:29965"/>
        <dbReference type="ChEBI" id="CHEBI:57540"/>
        <dbReference type="ChEBI" id="CHEBI:142554"/>
    </reaction>
    <physiologicalReaction direction="left-to-right" evidence="52">
        <dbReference type="Rhea" id="RHEA:19150"/>
    </physiologicalReaction>
</comment>
<comment type="cofactor">
    <cofactor evidence="1">
        <name>Zn(2+)</name>
        <dbReference type="ChEBI" id="CHEBI:29105"/>
    </cofactor>
    <text evidence="1">Binds 1 zinc ion per subunit.</text>
</comment>
<comment type="activity regulation">
    <text evidence="1">Compared to the defatty-acylase activity, the protein deacetylase activity is weak in vitro, and requires activation (By similarity). The histone deacetylase activity is strongly activated upon binding to nucleosomes and chromatin in vivo (By similarity). Two molecules of SIRT6 associate with the acidic patch of one nucleosome, while the C-terminal disordered region of SIRT6 associates with nucleosomal DNA, leading to efficient histone deacetylation (By similarity). The protein-lysine deacetylase activity is also activated by long-chain free fatty-acids (By similarity).</text>
</comment>
<comment type="subunit">
    <text evidence="1 6 22 29 42">Homodimer; binds to nucleosomes and DNA ends as a homodimer (By similarity). Interacts with RELA; interferes with RELA binding to target DNA (PubMed:19135889). Interacts with SMARCA5; promoting recruitment of SMARCA5/SNF2H to double-strand breaks (DSBs) sites (By similarity). Interacts with the mTORC2 complex; preventing the ability of SIRT6 to deacetylate FOXO1 (PubMed:31442424). Interacts with the CLOCK-BMAL1 complex; recruited by the CLOCK-BMAL1 complex to regulate expression of clock-controlled genes (PubMed:25083875). Interacts with CSNK2A2; preventing CSNK2A2 localization to the nucleus (PubMed:28355567).</text>
</comment>
<comment type="subcellular location">
    <subcellularLocation>
        <location evidence="4 5">Nucleus</location>
    </subcellularLocation>
    <subcellularLocation>
        <location evidence="1">Chromosome</location>
    </subcellularLocation>
    <subcellularLocation>
        <location evidence="1">Chromosome</location>
        <location evidence="1">Telomere</location>
    </subcellularLocation>
    <subcellularLocation>
        <location evidence="18">Endoplasmic reticulum</location>
    </subcellularLocation>
    <text evidence="1 18">Predominantly nuclear (By similarity). Associated with pericentric heterochromatin and telomeric heterochromatin regions (By similarity). Localizes to DNA damage sites: directly recognizes and binds double-strand breaks (DSBs) sites via a tunnel-like structure that has high affinity for DSBs (By similarity). A fraction localizes to the endoplasmic reticulum (PubMed:23552949).</text>
</comment>
<comment type="tissue specificity">
    <text evidence="4 5">Highest levels are found in muscle, thymus, spleen, brain and heart (at protein level).</text>
</comment>
<comment type="developmental stage">
    <text evidence="4">Expression peaks at embryonic day 11 and persists into adulthood.</text>
</comment>
<comment type="induction">
    <text evidence="31 36">By cold (PubMed:28723567). In hepatocytes, expression is increased following incubation in a ketonic medium (PubMed:30530497).</text>
</comment>
<comment type="domain">
    <text evidence="1">The C-terminal disordered region mediates non-specific DNA-binding.</text>
</comment>
<comment type="PTM">
    <text evidence="1">Acetylated at Lys-33 (By similarity). Deacetylation at Lys-33 by SIRT1 promotes homomultimerization and binding to double-strand breaks (DSBs) sites (By similarity).</text>
</comment>
<comment type="PTM">
    <text evidence="1">Phosphorylation at Ser-10 by MAPK8/JNK1 in response to oxidative stress stimulates the mono-ADP-ribosyltransferase activity on PARP1, leading to PARP1 recruitment to double-strand breaks (DSBs).</text>
</comment>
<comment type="PTM">
    <text evidence="1">Monoubiquitinated at Lys-170 by STUB1/CHIP, preventing its degradation by the proteasome.</text>
</comment>
<comment type="PTM">
    <text evidence="1">Sumoylated, leading to specifically decrease ability to deacetylate histone H3 at 'Lys-56' (H3K56ac).</text>
</comment>
<comment type="disruption phenotype">
    <text evidence="5 11 12 13 19 20 27 28 30 31 32 33 36 38 44">Mice display multiple defects, accelerated aging and die a few weeks after birth, because of impaired genomic stability (PubMed:16439206). Mice do not show any visible phenotype at birth and undergo a normal development during the first two weeks, except for reduced growth (PubMed:16439206). By two/three weeks of age, mice in a 129/SvJ background display severe metabolic defects and develop abnormalities usually associated with aging (PubMed:16439206, PubMed:20847051). These include acute loss of subcutaneous fat, lordokyphosis, erosion of the superficial colon epithelium, severe lymphopenia, osteopenia and severely reduced IGF1 serum levels (PubMed:16439206). Severe hypoglycemia, characterized by very low levels of blood glucose, is also observed (PubMed:16439206, PubMed:20847051). Mice also show defects in DNA double-strand break (DSB) repair (PubMed:23911928, PubMed:32538779). Derepression of LINE-1 retrotransposon elements is also observed, leading to an accumulation of cytoplasmic L1 cDNAs, which triggers the cGAS-STING pathway, driving inflammation (PubMed:30853213). Mice die about 24 days after birth (PubMed:16439206). Mice in a mixed 129/SvJ and BALB/c background reach adulthood: at 200 days of age, more than 80% of the female mice survive whereas only 10% of male mice are alive (PubMed:28448551). Mutant mice in this mixed background (129/SvJ and BALB/c) display reduced body weight, increased glucose uptake and exhibit an age-dependent progressive impairment of retinal function accompanied by thinning of retinal layers (PubMed:28448551). Sirt6-deficient mice that are haploinsufficient with p53/Tp53 display a strongly extended life span in both females and males (PubMed:29474172). Conditional deletion in the liver leads to increased glycolysis, fatty liver, triglyceride synthesis and reduced beta-oxidation (PubMed:20816089). Conditional deletion in the liver also leads to elevated LDL-cholesterol levels (PubMed:23974119). Conditional deletion in hepatocytes leads to impaired ketogenesis (PubMed:30530497). Conditional deletion in adipocytes promotes high-fat diet-induced obesity because of impaired lipolytic activity (PubMed:28250020, PubMed:28723567). Conditional deletion in pancretic beta-cells leads to glucose intolerance with severely impaired glucose-stimulated insulin secretion (PubMed:27457971). Conditional deletion in neurons leads to postnatal growth retardation and obesity (PubMed:21098266). Conditional deletion in podocytes exacerbates podocyte injury and proteinuria; defects are caused by derepression of the Notch signaling (PubMed:28871079).</text>
</comment>
<comment type="miscellaneous">
    <text evidence="39">Compared to beaver, mouse SIRT6 displays lower histone deacetylase activity and ability to promote double-strand break (DSB) repair, possibly leading to shorter life span.</text>
</comment>
<comment type="similarity">
    <text evidence="48">Belongs to the sirtuin family. Class IV subfamily.</text>
</comment>
<gene>
    <name evidence="47 53" type="primary">Sirt6</name>
    <name type="synonym">Sir2l6</name>
</gene>
<feature type="initiator methionine" description="Removed" evidence="1">
    <location>
        <position position="1"/>
    </location>
</feature>
<feature type="chain" id="PRO_0000110270" description="NAD-dependent protein deacylase sirtuin-6">
    <location>
        <begin position="2"/>
        <end position="334"/>
    </location>
</feature>
<feature type="domain" description="Deacetylase sirtuin-type" evidence="2">
    <location>
        <begin position="27"/>
        <end position="272"/>
    </location>
</feature>
<feature type="region of interest" description="Disordered" evidence="3">
    <location>
        <begin position="312"/>
        <end position="334"/>
    </location>
</feature>
<feature type="active site" description="Proton acceptor" evidence="2 49 50 51">
    <location>
        <position position="133"/>
    </location>
</feature>
<feature type="binding site" evidence="1">
    <location>
        <position position="53"/>
    </location>
    <ligand>
        <name>NAD(+)</name>
        <dbReference type="ChEBI" id="CHEBI:57540"/>
    </ligand>
</feature>
<feature type="binding site" evidence="1">
    <location>
        <position position="57"/>
    </location>
    <ligand>
        <name>NAD(+)</name>
        <dbReference type="ChEBI" id="CHEBI:57540"/>
    </ligand>
</feature>
<feature type="binding site" evidence="1">
    <location>
        <position position="64"/>
    </location>
    <ligand>
        <name>NAD(+)</name>
        <dbReference type="ChEBI" id="CHEBI:57540"/>
    </ligand>
</feature>
<feature type="binding site" evidence="1">
    <location>
        <position position="65"/>
    </location>
    <ligand>
        <name>NAD(+)</name>
        <dbReference type="ChEBI" id="CHEBI:57540"/>
    </ligand>
</feature>
<feature type="binding site" evidence="1">
    <location>
        <position position="71"/>
    </location>
    <ligand>
        <name>NAD(+)</name>
        <dbReference type="ChEBI" id="CHEBI:57540"/>
    </ligand>
</feature>
<feature type="binding site" evidence="1">
    <location>
        <position position="113"/>
    </location>
    <ligand>
        <name>NAD(+)</name>
        <dbReference type="ChEBI" id="CHEBI:57540"/>
    </ligand>
</feature>
<feature type="binding site" evidence="1">
    <location>
        <position position="133"/>
    </location>
    <ligand>
        <name>NAD(+)</name>
        <dbReference type="ChEBI" id="CHEBI:57540"/>
    </ligand>
</feature>
<feature type="binding site" evidence="2">
    <location>
        <position position="141"/>
    </location>
    <ligand>
        <name>Zn(2+)</name>
        <dbReference type="ChEBI" id="CHEBI:29105"/>
    </ligand>
</feature>
<feature type="binding site" evidence="2">
    <location>
        <position position="144"/>
    </location>
    <ligand>
        <name>Zn(2+)</name>
        <dbReference type="ChEBI" id="CHEBI:29105"/>
    </ligand>
</feature>
<feature type="binding site" evidence="2">
    <location>
        <position position="166"/>
    </location>
    <ligand>
        <name>Zn(2+)</name>
        <dbReference type="ChEBI" id="CHEBI:29105"/>
    </ligand>
</feature>
<feature type="binding site" evidence="2">
    <location>
        <position position="177"/>
    </location>
    <ligand>
        <name>Zn(2+)</name>
        <dbReference type="ChEBI" id="CHEBI:29105"/>
    </ligand>
</feature>
<feature type="binding site" evidence="1">
    <location>
        <position position="214"/>
    </location>
    <ligand>
        <name>NAD(+)</name>
        <dbReference type="ChEBI" id="CHEBI:57540"/>
    </ligand>
</feature>
<feature type="binding site" evidence="1">
    <location>
        <position position="216"/>
    </location>
    <ligand>
        <name>NAD(+)</name>
        <dbReference type="ChEBI" id="CHEBI:57540"/>
    </ligand>
</feature>
<feature type="binding site" evidence="1">
    <location>
        <position position="240"/>
    </location>
    <ligand>
        <name>NAD(+)</name>
        <dbReference type="ChEBI" id="CHEBI:57540"/>
    </ligand>
</feature>
<feature type="binding site" evidence="1">
    <location>
        <position position="242"/>
    </location>
    <ligand>
        <name>NAD(+)</name>
        <dbReference type="ChEBI" id="CHEBI:57540"/>
    </ligand>
</feature>
<feature type="binding site" evidence="1">
    <location>
        <position position="258"/>
    </location>
    <ligand>
        <name>NAD(+)</name>
        <dbReference type="ChEBI" id="CHEBI:57540"/>
    </ligand>
</feature>
<feature type="modified residue" description="N-acetylserine" evidence="1">
    <location>
        <position position="2"/>
    </location>
</feature>
<feature type="modified residue" description="Phosphoserine" evidence="1">
    <location>
        <position position="10"/>
    </location>
</feature>
<feature type="modified residue" description="N6-acetyllysine" evidence="1">
    <location>
        <position position="33"/>
    </location>
</feature>
<feature type="cross-link" description="Glycyl lysine isopeptide (Lys-Gly) (interchain with G-Cter in ubiquitin)" evidence="1">
    <location>
        <position position="170"/>
    </location>
</feature>
<feature type="mutagenesis site" description="Abolished NAD-dependent protein deacetylase, defatty-acylase and mono-ADP-ribosyltransferase activities." evidence="4 23">
    <original>S</original>
    <variation>Y</variation>
    <variation>A</variation>
    <location>
        <position position="56"/>
    </location>
</feature>
<feature type="mutagenesis site" description="Does not affect the NAD-dependent protein defatty-acylase activity. Abolished NAD-dependent protein deacetylase and mono-ADP-ribosyltransferase activities." evidence="23 40">
    <original>G</original>
    <variation>A</variation>
    <location>
        <position position="60"/>
    </location>
</feature>
<feature type="mutagenesis site" description="Embryonic lethality in knockin mice; mice fail to form embryonic bodies and retain pluripotent gene expression, leading to impaired embryonic stem cell differentiation. Defects are caused by a failure to deacetylate histone H3 at 'Lys-9' (H3K9)." evidence="34">
    <original>D</original>
    <variation>H</variation>
    <location>
        <position position="63"/>
    </location>
</feature>
<feature type="mutagenesis site" description="Does not affect the mono-ADP-ribosyltransferase activity. Abolished NAD-dependent protein deacetylase and defatty-acylase activities." evidence="23 40">
    <original>R</original>
    <variation>A</variation>
    <location>
        <position position="65"/>
    </location>
</feature>
<feature type="mutagenesis site" description="Abolished NAD-dependent protein deacetylase, deacylase and mono-ADP-ribosyltransferase activities." evidence="4 9 27 35 40">
    <original>H</original>
    <variation>Y</variation>
    <location>
        <position position="133"/>
    </location>
</feature>
<feature type="mutagenesis site" description="Increased histone deacetylase activity, ability to promote double-strand break (DSB) repair, leading to increased life span; when associated with H-249 and 260-D--Q-264." evidence="39">
    <original>R</original>
    <variation>K</variation>
    <location>
        <position position="235"/>
    </location>
</feature>
<feature type="mutagenesis site" description="Increased histone deacetylase activity, ability to promote double-strand break (DSB) repair, leading to increased life span; when associated with K-235 and 260-D--Q-264." evidence="39">
    <original>Q</original>
    <variation>H</variation>
    <location>
        <position position="249"/>
    </location>
</feature>
<feature type="mutagenesis site" description="Increased histone deacetylase activity, ability to promote double-strand break (DSB) repair, leading to increased life span; when associated with K-235 and H-249." evidence="39">
    <original>EVMCR</original>
    <variation>DVMTQ</variation>
    <location>
        <begin position="260"/>
        <end position="264"/>
    </location>
</feature>
<protein>
    <recommendedName>
        <fullName evidence="48">NAD-dependent protein deacylase sirtuin-6</fullName>
        <ecNumber evidence="1">2.3.1.-</ecNumber>
    </recommendedName>
    <alternativeName>
        <fullName evidence="48">NAD-dependent protein deacetylase sirtuin-6</fullName>
        <ecNumber evidence="2 4 34 35 39 41">2.3.1.286</ecNumber>
    </alternativeName>
    <alternativeName>
        <fullName evidence="48">Protein mono-ADP-ribosyltransferase sirtuin-6</fullName>
        <ecNumber evidence="23 40 52">2.4.2.-</ecNumber>
    </alternativeName>
    <alternativeName>
        <fullName evidence="47">Regulatory protein SIR2 homolog 6</fullName>
        <shortName evidence="47">mSIRT6</shortName>
    </alternativeName>
    <alternativeName>
        <fullName>SIR2-like protein 6</fullName>
    </alternativeName>
</protein>
<dbReference type="EC" id="2.3.1.-" evidence="1"/>
<dbReference type="EC" id="2.3.1.286" evidence="2 4 34 35 39 41"/>
<dbReference type="EC" id="2.4.2.-" evidence="23 40 52"/>
<dbReference type="EMBL" id="BC052763">
    <property type="protein sequence ID" value="AAH52763.1"/>
    <property type="molecule type" value="mRNA"/>
</dbReference>
<dbReference type="CCDS" id="CCDS24066.1"/>
<dbReference type="RefSeq" id="NP_001365873.1">
    <property type="nucleotide sequence ID" value="NM_001378944.1"/>
</dbReference>
<dbReference type="RefSeq" id="NP_853617.1">
    <property type="nucleotide sequence ID" value="NM_181586.4"/>
</dbReference>
<dbReference type="SMR" id="P59941"/>
<dbReference type="BioGRID" id="206064">
    <property type="interactions" value="3"/>
</dbReference>
<dbReference type="FunCoup" id="P59941">
    <property type="interactions" value="1997"/>
</dbReference>
<dbReference type="IntAct" id="P59941">
    <property type="interactions" value="1"/>
</dbReference>
<dbReference type="STRING" id="10090.ENSMUSP00000048971"/>
<dbReference type="iPTMnet" id="P59941"/>
<dbReference type="PhosphoSitePlus" id="P59941"/>
<dbReference type="jPOST" id="P59941"/>
<dbReference type="PaxDb" id="10090-ENSMUSP00000048971"/>
<dbReference type="ProteomicsDB" id="261372"/>
<dbReference type="Pumba" id="P59941"/>
<dbReference type="Antibodypedia" id="11389">
    <property type="antibodies" value="707 antibodies from 42 providers"/>
</dbReference>
<dbReference type="DNASU" id="50721"/>
<dbReference type="Ensembl" id="ENSMUST00000042923.9">
    <property type="protein sequence ID" value="ENSMUSP00000048971.9"/>
    <property type="gene ID" value="ENSMUSG00000034748.17"/>
</dbReference>
<dbReference type="GeneID" id="50721"/>
<dbReference type="KEGG" id="mmu:50721"/>
<dbReference type="UCSC" id="uc007giy.2">
    <property type="organism name" value="mouse"/>
</dbReference>
<dbReference type="AGR" id="MGI:1354161"/>
<dbReference type="CTD" id="51548"/>
<dbReference type="MGI" id="MGI:1354161">
    <property type="gene designation" value="Sirt6"/>
</dbReference>
<dbReference type="VEuPathDB" id="HostDB:ENSMUSG00000034748"/>
<dbReference type="eggNOG" id="KOG1905">
    <property type="taxonomic scope" value="Eukaryota"/>
</dbReference>
<dbReference type="GeneTree" id="ENSGT00940000160088"/>
<dbReference type="HOGENOM" id="CLU_023643_6_0_1"/>
<dbReference type="InParanoid" id="P59941"/>
<dbReference type="OMA" id="EQCKKCR"/>
<dbReference type="OrthoDB" id="2919105at2759"/>
<dbReference type="PhylomeDB" id="P59941"/>
<dbReference type="TreeFam" id="TF106184"/>
<dbReference type="BRENDA" id="2.3.1.B41">
    <property type="organism ID" value="3474"/>
</dbReference>
<dbReference type="Reactome" id="R-MMU-5693607">
    <property type="pathway name" value="Processing of DNA double-strand break ends"/>
</dbReference>
<dbReference type="BioGRID-ORCS" id="50721">
    <property type="hits" value="12 hits in 119 CRISPR screens"/>
</dbReference>
<dbReference type="ChiTaRS" id="Sirt6">
    <property type="organism name" value="mouse"/>
</dbReference>
<dbReference type="PRO" id="PR:P59941"/>
<dbReference type="Proteomes" id="UP000000589">
    <property type="component" value="Chromosome 10"/>
</dbReference>
<dbReference type="RNAct" id="P59941">
    <property type="molecule type" value="protein"/>
</dbReference>
<dbReference type="Bgee" id="ENSMUSG00000034748">
    <property type="expression patterns" value="Expressed in embryonic brain and 115 other cell types or tissues"/>
</dbReference>
<dbReference type="ExpressionAtlas" id="P59941">
    <property type="expression patterns" value="baseline and differential"/>
</dbReference>
<dbReference type="GO" id="GO:0000785">
    <property type="term" value="C:chromatin"/>
    <property type="evidence" value="ECO:0000314"/>
    <property type="project" value="UniProt"/>
</dbReference>
<dbReference type="GO" id="GO:0099115">
    <property type="term" value="C:chromosome, subtelomeric region"/>
    <property type="evidence" value="ECO:0000250"/>
    <property type="project" value="GO_Central"/>
</dbReference>
<dbReference type="GO" id="GO:0005783">
    <property type="term" value="C:endoplasmic reticulum"/>
    <property type="evidence" value="ECO:0000250"/>
    <property type="project" value="UniProtKB"/>
</dbReference>
<dbReference type="GO" id="GO:0005654">
    <property type="term" value="C:nucleoplasm"/>
    <property type="evidence" value="ECO:0000250"/>
    <property type="project" value="UniProtKB"/>
</dbReference>
<dbReference type="GO" id="GO:0005634">
    <property type="term" value="C:nucleus"/>
    <property type="evidence" value="ECO:0000314"/>
    <property type="project" value="UniProtKB"/>
</dbReference>
<dbReference type="GO" id="GO:0005721">
    <property type="term" value="C:pericentric heterochromatin"/>
    <property type="evidence" value="ECO:0007669"/>
    <property type="project" value="Ensembl"/>
</dbReference>
<dbReference type="GO" id="GO:0035861">
    <property type="term" value="C:site of double-strand break"/>
    <property type="evidence" value="ECO:0007669"/>
    <property type="project" value="Ensembl"/>
</dbReference>
<dbReference type="GO" id="GO:0003682">
    <property type="term" value="F:chromatin binding"/>
    <property type="evidence" value="ECO:0000314"/>
    <property type="project" value="MGI"/>
</dbReference>
<dbReference type="GO" id="GO:0031490">
    <property type="term" value="F:chromatin DNA binding"/>
    <property type="evidence" value="ECO:0000250"/>
    <property type="project" value="UniProtKB"/>
</dbReference>
<dbReference type="GO" id="GO:0003684">
    <property type="term" value="F:damaged DNA binding"/>
    <property type="evidence" value="ECO:0000250"/>
    <property type="project" value="UniProtKB"/>
</dbReference>
<dbReference type="GO" id="GO:0140612">
    <property type="term" value="F:DNA damage sensor activity"/>
    <property type="evidence" value="ECO:0000250"/>
    <property type="project" value="UniProtKB"/>
</dbReference>
<dbReference type="GO" id="GO:0017136">
    <property type="term" value="F:histone deacetylase activity, NAD-dependent"/>
    <property type="evidence" value="ECO:0000250"/>
    <property type="project" value="UniProtKB"/>
</dbReference>
<dbReference type="GO" id="GO:0035033">
    <property type="term" value="F:histone deacetylase regulator activity"/>
    <property type="evidence" value="ECO:0007669"/>
    <property type="project" value="Ensembl"/>
</dbReference>
<dbReference type="GO" id="GO:0097372">
    <property type="term" value="F:histone H3K18 deacetylase activity, NAD-dependent"/>
    <property type="evidence" value="ECO:0000314"/>
    <property type="project" value="UniProtKB"/>
</dbReference>
<dbReference type="GO" id="GO:0140765">
    <property type="term" value="F:histone H3K56 deacetylase activity, NAD-dependent"/>
    <property type="evidence" value="ECO:0000314"/>
    <property type="project" value="UniProtKB"/>
</dbReference>
<dbReference type="GO" id="GO:0046969">
    <property type="term" value="F:histone H3K9 deacetylase activity, NAD-dependent"/>
    <property type="evidence" value="ECO:0000314"/>
    <property type="project" value="UniProtKB"/>
</dbReference>
<dbReference type="GO" id="GO:0106222">
    <property type="term" value="F:lncRNA binding"/>
    <property type="evidence" value="ECO:0007669"/>
    <property type="project" value="Ensembl"/>
</dbReference>
<dbReference type="GO" id="GO:0070403">
    <property type="term" value="F:NAD+ binding"/>
    <property type="evidence" value="ECO:0000250"/>
    <property type="project" value="UniProtKB"/>
</dbReference>
<dbReference type="GO" id="GO:1990404">
    <property type="term" value="F:NAD+-protein mono-ADP-ribosyltransferase activity"/>
    <property type="evidence" value="ECO:0000314"/>
    <property type="project" value="UniProtKB"/>
</dbReference>
<dbReference type="GO" id="GO:0106274">
    <property type="term" value="F:NAD+-protein-arginine ADP-ribosyltransferase activity"/>
    <property type="evidence" value="ECO:0000314"/>
    <property type="project" value="UniProtKB"/>
</dbReference>
<dbReference type="GO" id="GO:0140804">
    <property type="term" value="F:NAD+-protein-lysine ADP-ribosyltransferase activity"/>
    <property type="evidence" value="ECO:0007669"/>
    <property type="project" value="RHEA"/>
</dbReference>
<dbReference type="GO" id="GO:0140773">
    <property type="term" value="F:NAD-dependent protein demyristoylase activity"/>
    <property type="evidence" value="ECO:0000250"/>
    <property type="project" value="UniProtKB"/>
</dbReference>
<dbReference type="GO" id="GO:0140774">
    <property type="term" value="F:NAD-dependent protein depalmitoylase activity"/>
    <property type="evidence" value="ECO:0000250"/>
    <property type="project" value="UniProtKB"/>
</dbReference>
<dbReference type="GO" id="GO:0034979">
    <property type="term" value="F:NAD-dependent protein lysine deacetylase activity"/>
    <property type="evidence" value="ECO:0000314"/>
    <property type="project" value="UniProtKB"/>
</dbReference>
<dbReference type="GO" id="GO:0031491">
    <property type="term" value="F:nucleosome binding"/>
    <property type="evidence" value="ECO:0000250"/>
    <property type="project" value="UniProtKB"/>
</dbReference>
<dbReference type="GO" id="GO:0016779">
    <property type="term" value="F:nucleotidyltransferase activity"/>
    <property type="evidence" value="ECO:0007669"/>
    <property type="project" value="UniProtKB-KW"/>
</dbReference>
<dbReference type="GO" id="GO:0042803">
    <property type="term" value="F:protein homodimerization activity"/>
    <property type="evidence" value="ECO:0000250"/>
    <property type="project" value="UniProtKB"/>
</dbReference>
<dbReference type="GO" id="GO:1904841">
    <property type="term" value="F:TORC2 complex binding"/>
    <property type="evidence" value="ECO:0000314"/>
    <property type="project" value="UniProtKB"/>
</dbReference>
<dbReference type="GO" id="GO:0003714">
    <property type="term" value="F:transcription corepressor activity"/>
    <property type="evidence" value="ECO:0000316"/>
    <property type="project" value="CACAO"/>
</dbReference>
<dbReference type="GO" id="GO:0008270">
    <property type="term" value="F:zinc ion binding"/>
    <property type="evidence" value="ECO:0000250"/>
    <property type="project" value="UniProtKB"/>
</dbReference>
<dbReference type="GO" id="GO:0006284">
    <property type="term" value="P:base-excision repair"/>
    <property type="evidence" value="ECO:0000315"/>
    <property type="project" value="CACAO"/>
</dbReference>
<dbReference type="GO" id="GO:0055007">
    <property type="term" value="P:cardiac muscle cell differentiation"/>
    <property type="evidence" value="ECO:0000315"/>
    <property type="project" value="UniProtKB"/>
</dbReference>
<dbReference type="GO" id="GO:1904385">
    <property type="term" value="P:cellular response to angiotensin"/>
    <property type="evidence" value="ECO:0007669"/>
    <property type="project" value="Ensembl"/>
</dbReference>
<dbReference type="GO" id="GO:1990859">
    <property type="term" value="P:cellular response to endothelin"/>
    <property type="evidence" value="ECO:0007669"/>
    <property type="project" value="Ensembl"/>
</dbReference>
<dbReference type="GO" id="GO:0070301">
    <property type="term" value="P:cellular response to hydrogen peroxide"/>
    <property type="evidence" value="ECO:0007669"/>
    <property type="project" value="Ensembl"/>
</dbReference>
<dbReference type="GO" id="GO:0032922">
    <property type="term" value="P:circadian regulation of gene expression"/>
    <property type="evidence" value="ECO:0000315"/>
    <property type="project" value="UniProtKB"/>
</dbReference>
<dbReference type="GO" id="GO:0008340">
    <property type="term" value="P:determination of adult lifespan"/>
    <property type="evidence" value="ECO:0000315"/>
    <property type="project" value="UniProtKB"/>
</dbReference>
<dbReference type="GO" id="GO:0140861">
    <property type="term" value="P:DNA repair-dependent chromatin remodeling"/>
    <property type="evidence" value="ECO:0000314"/>
    <property type="project" value="UniProtKB"/>
</dbReference>
<dbReference type="GO" id="GO:0006302">
    <property type="term" value="P:double-strand break repair"/>
    <property type="evidence" value="ECO:0000250"/>
    <property type="project" value="UniProtKB"/>
</dbReference>
<dbReference type="GO" id="GO:0042593">
    <property type="term" value="P:glucose homeostasis"/>
    <property type="evidence" value="ECO:0000315"/>
    <property type="project" value="CACAO"/>
</dbReference>
<dbReference type="GO" id="GO:0042181">
    <property type="term" value="P:ketone biosynthetic process"/>
    <property type="evidence" value="ECO:0000315"/>
    <property type="project" value="UniProtKB"/>
</dbReference>
<dbReference type="GO" id="GO:0008285">
    <property type="term" value="P:negative regulation of cell population proliferation"/>
    <property type="evidence" value="ECO:0000315"/>
    <property type="project" value="CACAO"/>
</dbReference>
<dbReference type="GO" id="GO:2000773">
    <property type="term" value="P:negative regulation of cellular senescence"/>
    <property type="evidence" value="ECO:0007669"/>
    <property type="project" value="Ensembl"/>
</dbReference>
<dbReference type="GO" id="GO:0046325">
    <property type="term" value="P:negative regulation of D-glucose import"/>
    <property type="evidence" value="ECO:0000315"/>
    <property type="project" value="CACAO"/>
</dbReference>
<dbReference type="GO" id="GO:0045892">
    <property type="term" value="P:negative regulation of DNA-templated transcription"/>
    <property type="evidence" value="ECO:0000315"/>
    <property type="project" value="CACAO"/>
</dbReference>
<dbReference type="GO" id="GO:0045721">
    <property type="term" value="P:negative regulation of gluconeogenesis"/>
    <property type="evidence" value="ECO:0000250"/>
    <property type="project" value="UniProtKB"/>
</dbReference>
<dbReference type="GO" id="GO:0045820">
    <property type="term" value="P:negative regulation of glycolytic process"/>
    <property type="evidence" value="ECO:0000315"/>
    <property type="project" value="CACAO"/>
</dbReference>
<dbReference type="GO" id="GO:0042308">
    <property type="term" value="P:negative regulation of protein import into nucleus"/>
    <property type="evidence" value="ECO:0000315"/>
    <property type="project" value="UniProtKB"/>
</dbReference>
<dbReference type="GO" id="GO:0120186">
    <property type="term" value="P:negative regulation of protein localization to chromatin"/>
    <property type="evidence" value="ECO:0007669"/>
    <property type="project" value="Ensembl"/>
</dbReference>
<dbReference type="GO" id="GO:0000122">
    <property type="term" value="P:negative regulation of transcription by RNA polymerase II"/>
    <property type="evidence" value="ECO:0000315"/>
    <property type="project" value="UniProtKB"/>
</dbReference>
<dbReference type="GO" id="GO:0034244">
    <property type="term" value="P:negative regulation of transcription elongation by RNA polymerase II"/>
    <property type="evidence" value="ECO:0000314"/>
    <property type="project" value="UniProtKB"/>
</dbReference>
<dbReference type="GO" id="GO:0031508">
    <property type="term" value="P:pericentric heterochromatin formation"/>
    <property type="evidence" value="ECO:0000250"/>
    <property type="project" value="UniProtKB"/>
</dbReference>
<dbReference type="GO" id="GO:1905555">
    <property type="term" value="P:positive regulation of blood vessel branching"/>
    <property type="evidence" value="ECO:0007669"/>
    <property type="project" value="Ensembl"/>
</dbReference>
<dbReference type="GO" id="GO:1902732">
    <property type="term" value="P:positive regulation of chondrocyte proliferation"/>
    <property type="evidence" value="ECO:0007669"/>
    <property type="project" value="Ensembl"/>
</dbReference>
<dbReference type="GO" id="GO:0120162">
    <property type="term" value="P:positive regulation of cold-induced thermogenesis"/>
    <property type="evidence" value="ECO:0000315"/>
    <property type="project" value="UniProtKB"/>
</dbReference>
<dbReference type="GO" id="GO:2000781">
    <property type="term" value="P:positive regulation of double-strand break repair"/>
    <property type="evidence" value="ECO:0000314"/>
    <property type="project" value="UniProtKB"/>
</dbReference>
<dbReference type="GO" id="GO:0045600">
    <property type="term" value="P:positive regulation of fat cell differentiation"/>
    <property type="evidence" value="ECO:0000315"/>
    <property type="project" value="UniProtKB"/>
</dbReference>
<dbReference type="GO" id="GO:0048146">
    <property type="term" value="P:positive regulation of fibroblast proliferation"/>
    <property type="evidence" value="ECO:0000315"/>
    <property type="project" value="CACAO"/>
</dbReference>
<dbReference type="GO" id="GO:0032024">
    <property type="term" value="P:positive regulation of insulin secretion"/>
    <property type="evidence" value="ECO:0000314"/>
    <property type="project" value="UniProtKB"/>
</dbReference>
<dbReference type="GO" id="GO:0032436">
    <property type="term" value="P:positive regulation of proteasomal ubiquitin-dependent protein catabolic process"/>
    <property type="evidence" value="ECO:0007669"/>
    <property type="project" value="Ensembl"/>
</dbReference>
<dbReference type="GO" id="GO:0046827">
    <property type="term" value="P:positive regulation of protein export from nucleus"/>
    <property type="evidence" value="ECO:0000314"/>
    <property type="project" value="UniProtKB"/>
</dbReference>
<dbReference type="GO" id="GO:0120187">
    <property type="term" value="P:positive regulation of protein localization to chromatin"/>
    <property type="evidence" value="ECO:0000314"/>
    <property type="project" value="UniProt"/>
</dbReference>
<dbReference type="GO" id="GO:2000738">
    <property type="term" value="P:positive regulation of stem cell differentiation"/>
    <property type="evidence" value="ECO:0000315"/>
    <property type="project" value="UniProtKB"/>
</dbReference>
<dbReference type="GO" id="GO:1902459">
    <property type="term" value="P:positive regulation of stem cell population maintenance"/>
    <property type="evidence" value="ECO:0007669"/>
    <property type="project" value="Ensembl"/>
</dbReference>
<dbReference type="GO" id="GO:2000648">
    <property type="term" value="P:positive regulation of stem cell proliferation"/>
    <property type="evidence" value="ECO:0000315"/>
    <property type="project" value="CACAO"/>
</dbReference>
<dbReference type="GO" id="GO:0032206">
    <property type="term" value="P:positive regulation of telomere maintenance"/>
    <property type="evidence" value="ECO:0007669"/>
    <property type="project" value="Ensembl"/>
</dbReference>
<dbReference type="GO" id="GO:1905564">
    <property type="term" value="P:positive regulation of vascular endothelial cell proliferation"/>
    <property type="evidence" value="ECO:0007669"/>
    <property type="project" value="Ensembl"/>
</dbReference>
<dbReference type="GO" id="GO:0003247">
    <property type="term" value="P:post-embryonic cardiac muscle cell growth involved in heart morphogenesis"/>
    <property type="evidence" value="ECO:0007669"/>
    <property type="project" value="Ensembl"/>
</dbReference>
<dbReference type="GO" id="GO:0006476">
    <property type="term" value="P:protein deacetylation"/>
    <property type="evidence" value="ECO:0000315"/>
    <property type="project" value="CACAO"/>
</dbReference>
<dbReference type="GO" id="GO:0051697">
    <property type="term" value="P:protein delipidation"/>
    <property type="evidence" value="ECO:0000250"/>
    <property type="project" value="UniProtKB"/>
</dbReference>
<dbReference type="GO" id="GO:0031648">
    <property type="term" value="P:protein destabilization"/>
    <property type="evidence" value="ECO:0000315"/>
    <property type="project" value="CACAO"/>
</dbReference>
<dbReference type="GO" id="GO:0006606">
    <property type="term" value="P:protein import into nucleus"/>
    <property type="evidence" value="ECO:0007669"/>
    <property type="project" value="Ensembl"/>
</dbReference>
<dbReference type="GO" id="GO:1990166">
    <property type="term" value="P:protein localization to site of double-strand break"/>
    <property type="evidence" value="ECO:0007669"/>
    <property type="project" value="Ensembl"/>
</dbReference>
<dbReference type="GO" id="GO:0042752">
    <property type="term" value="P:regulation of circadian rhythm"/>
    <property type="evidence" value="ECO:0000315"/>
    <property type="project" value="UniProtKB"/>
</dbReference>
<dbReference type="GO" id="GO:0010569">
    <property type="term" value="P:regulation of double-strand break repair via homologous recombination"/>
    <property type="evidence" value="ECO:0000250"/>
    <property type="project" value="UniProtKB"/>
</dbReference>
<dbReference type="GO" id="GO:0050994">
    <property type="term" value="P:regulation of lipid catabolic process"/>
    <property type="evidence" value="ECO:0000315"/>
    <property type="project" value="UniProtKB"/>
</dbReference>
<dbReference type="GO" id="GO:0019216">
    <property type="term" value="P:regulation of lipid metabolic process"/>
    <property type="evidence" value="ECO:0000314"/>
    <property type="project" value="UniProtKB"/>
</dbReference>
<dbReference type="GO" id="GO:1903076">
    <property type="term" value="P:regulation of protein localization to plasma membrane"/>
    <property type="evidence" value="ECO:0007669"/>
    <property type="project" value="Ensembl"/>
</dbReference>
<dbReference type="GO" id="GO:0031667">
    <property type="term" value="P:response to nutrient levels"/>
    <property type="evidence" value="ECO:0007669"/>
    <property type="project" value="Ensembl"/>
</dbReference>
<dbReference type="GO" id="GO:0009411">
    <property type="term" value="P:response to UV"/>
    <property type="evidence" value="ECO:0007669"/>
    <property type="project" value="Ensembl"/>
</dbReference>
<dbReference type="GO" id="GO:0031509">
    <property type="term" value="P:subtelomeric heterochromatin formation"/>
    <property type="evidence" value="ECO:0007669"/>
    <property type="project" value="Ensembl"/>
</dbReference>
<dbReference type="GO" id="GO:0010526">
    <property type="term" value="P:transposable element silencing"/>
    <property type="evidence" value="ECO:0000314"/>
    <property type="project" value="UniProtKB"/>
</dbReference>
<dbReference type="CDD" id="cd01410">
    <property type="entry name" value="SIRT7"/>
    <property type="match status" value="1"/>
</dbReference>
<dbReference type="FunFam" id="2.20.28.200:FF:000001">
    <property type="entry name" value="NAD-dependent protein deacetylase sirtuin-6"/>
    <property type="match status" value="1"/>
</dbReference>
<dbReference type="FunFam" id="3.40.50.1220:FF:000029">
    <property type="entry name" value="NAD-dependent protein deacetylase sirtuin-6 isoform X2"/>
    <property type="match status" value="1"/>
</dbReference>
<dbReference type="FunFam" id="3.40.50.1220:FF:000038">
    <property type="entry name" value="NAD-dependent protein deacetylase sirtuin-6 isoform X2"/>
    <property type="match status" value="1"/>
</dbReference>
<dbReference type="Gene3D" id="2.20.28.200">
    <property type="match status" value="1"/>
</dbReference>
<dbReference type="Gene3D" id="3.40.50.1220">
    <property type="entry name" value="TPP-binding domain"/>
    <property type="match status" value="1"/>
</dbReference>
<dbReference type="InterPro" id="IPR029035">
    <property type="entry name" value="DHS-like_NAD/FAD-binding_dom"/>
</dbReference>
<dbReference type="InterPro" id="IPR050134">
    <property type="entry name" value="NAD-dep_sirtuin_deacylases"/>
</dbReference>
<dbReference type="InterPro" id="IPR003000">
    <property type="entry name" value="Sirtuin"/>
</dbReference>
<dbReference type="InterPro" id="IPR026590">
    <property type="entry name" value="Ssirtuin_cat_dom"/>
</dbReference>
<dbReference type="PANTHER" id="PTHR11085">
    <property type="entry name" value="NAD-DEPENDENT PROTEIN DEACYLASE SIRTUIN-5, MITOCHONDRIAL-RELATED"/>
    <property type="match status" value="1"/>
</dbReference>
<dbReference type="PANTHER" id="PTHR11085:SF12">
    <property type="entry name" value="NAD-DEPENDENT PROTEIN DEACYLASE SIRTUIN-6"/>
    <property type="match status" value="1"/>
</dbReference>
<dbReference type="Pfam" id="PF02146">
    <property type="entry name" value="SIR2"/>
    <property type="match status" value="1"/>
</dbReference>
<dbReference type="SUPFAM" id="SSF52467">
    <property type="entry name" value="DHS-like NAD/FAD-binding domain"/>
    <property type="match status" value="1"/>
</dbReference>
<dbReference type="PROSITE" id="PS50305">
    <property type="entry name" value="SIRTUIN"/>
    <property type="match status" value="1"/>
</dbReference>
<name>SIR6_MOUSE</name>
<accession>P59941</accession>
<proteinExistence type="evidence at protein level"/>
<organism>
    <name type="scientific">Mus musculus</name>
    <name type="common">Mouse</name>
    <dbReference type="NCBI Taxonomy" id="10090"/>
    <lineage>
        <taxon>Eukaryota</taxon>
        <taxon>Metazoa</taxon>
        <taxon>Chordata</taxon>
        <taxon>Craniata</taxon>
        <taxon>Vertebrata</taxon>
        <taxon>Euteleostomi</taxon>
        <taxon>Mammalia</taxon>
        <taxon>Eutheria</taxon>
        <taxon>Euarchontoglires</taxon>
        <taxon>Glires</taxon>
        <taxon>Rodentia</taxon>
        <taxon>Myomorpha</taxon>
        <taxon>Muroidea</taxon>
        <taxon>Muridae</taxon>
        <taxon>Murinae</taxon>
        <taxon>Mus</taxon>
        <taxon>Mus</taxon>
    </lineage>
</organism>